<comment type="caution">
    <text evidence="2">Product of a dubious CDS prediction.</text>
</comment>
<reference key="1">
    <citation type="journal article" date="2004" name="Nat. Genet.">
        <title>Complete sequencing and characterization of 21,243 full-length human cDNAs.</title>
        <authorList>
            <person name="Ota T."/>
            <person name="Suzuki Y."/>
            <person name="Nishikawa T."/>
            <person name="Otsuki T."/>
            <person name="Sugiyama T."/>
            <person name="Irie R."/>
            <person name="Wakamatsu A."/>
            <person name="Hayashi K."/>
            <person name="Sato H."/>
            <person name="Nagai K."/>
            <person name="Kimura K."/>
            <person name="Makita H."/>
            <person name="Sekine M."/>
            <person name="Obayashi M."/>
            <person name="Nishi T."/>
            <person name="Shibahara T."/>
            <person name="Tanaka T."/>
            <person name="Ishii S."/>
            <person name="Yamamoto J."/>
            <person name="Saito K."/>
            <person name="Kawai Y."/>
            <person name="Isono Y."/>
            <person name="Nakamura Y."/>
            <person name="Nagahari K."/>
            <person name="Murakami K."/>
            <person name="Yasuda T."/>
            <person name="Iwayanagi T."/>
            <person name="Wagatsuma M."/>
            <person name="Shiratori A."/>
            <person name="Sudo H."/>
            <person name="Hosoiri T."/>
            <person name="Kaku Y."/>
            <person name="Kodaira H."/>
            <person name="Kondo H."/>
            <person name="Sugawara M."/>
            <person name="Takahashi M."/>
            <person name="Kanda K."/>
            <person name="Yokoi T."/>
            <person name="Furuya T."/>
            <person name="Kikkawa E."/>
            <person name="Omura Y."/>
            <person name="Abe K."/>
            <person name="Kamihara K."/>
            <person name="Katsuta N."/>
            <person name="Sato K."/>
            <person name="Tanikawa M."/>
            <person name="Yamazaki M."/>
            <person name="Ninomiya K."/>
            <person name="Ishibashi T."/>
            <person name="Yamashita H."/>
            <person name="Murakawa K."/>
            <person name="Fujimori K."/>
            <person name="Tanai H."/>
            <person name="Kimata M."/>
            <person name="Watanabe M."/>
            <person name="Hiraoka S."/>
            <person name="Chiba Y."/>
            <person name="Ishida S."/>
            <person name="Ono Y."/>
            <person name="Takiguchi S."/>
            <person name="Watanabe S."/>
            <person name="Yosida M."/>
            <person name="Hotuta T."/>
            <person name="Kusano J."/>
            <person name="Kanehori K."/>
            <person name="Takahashi-Fujii A."/>
            <person name="Hara H."/>
            <person name="Tanase T.-O."/>
            <person name="Nomura Y."/>
            <person name="Togiya S."/>
            <person name="Komai F."/>
            <person name="Hara R."/>
            <person name="Takeuchi K."/>
            <person name="Arita M."/>
            <person name="Imose N."/>
            <person name="Musashino K."/>
            <person name="Yuuki H."/>
            <person name="Oshima A."/>
            <person name="Sasaki N."/>
            <person name="Aotsuka S."/>
            <person name="Yoshikawa Y."/>
            <person name="Matsunawa H."/>
            <person name="Ichihara T."/>
            <person name="Shiohata N."/>
            <person name="Sano S."/>
            <person name="Moriya S."/>
            <person name="Momiyama H."/>
            <person name="Satoh N."/>
            <person name="Takami S."/>
            <person name="Terashima Y."/>
            <person name="Suzuki O."/>
            <person name="Nakagawa S."/>
            <person name="Senoh A."/>
            <person name="Mizoguchi H."/>
            <person name="Goto Y."/>
            <person name="Shimizu F."/>
            <person name="Wakebe H."/>
            <person name="Hishigaki H."/>
            <person name="Watanabe T."/>
            <person name="Sugiyama A."/>
            <person name="Takemoto M."/>
            <person name="Kawakami B."/>
            <person name="Yamazaki M."/>
            <person name="Watanabe K."/>
            <person name="Kumagai A."/>
            <person name="Itakura S."/>
            <person name="Fukuzumi Y."/>
            <person name="Fujimori Y."/>
            <person name="Komiyama M."/>
            <person name="Tashiro H."/>
            <person name="Tanigami A."/>
            <person name="Fujiwara T."/>
            <person name="Ono T."/>
            <person name="Yamada K."/>
            <person name="Fujii Y."/>
            <person name="Ozaki K."/>
            <person name="Hirao M."/>
            <person name="Ohmori Y."/>
            <person name="Kawabata A."/>
            <person name="Hikiji T."/>
            <person name="Kobatake N."/>
            <person name="Inagaki H."/>
            <person name="Ikema Y."/>
            <person name="Okamoto S."/>
            <person name="Okitani R."/>
            <person name="Kawakami T."/>
            <person name="Noguchi S."/>
            <person name="Itoh T."/>
            <person name="Shigeta K."/>
            <person name="Senba T."/>
            <person name="Matsumura K."/>
            <person name="Nakajima Y."/>
            <person name="Mizuno T."/>
            <person name="Morinaga M."/>
            <person name="Sasaki M."/>
            <person name="Togashi T."/>
            <person name="Oyama M."/>
            <person name="Hata H."/>
            <person name="Watanabe M."/>
            <person name="Komatsu T."/>
            <person name="Mizushima-Sugano J."/>
            <person name="Satoh T."/>
            <person name="Shirai Y."/>
            <person name="Takahashi Y."/>
            <person name="Nakagawa K."/>
            <person name="Okumura K."/>
            <person name="Nagase T."/>
            <person name="Nomura N."/>
            <person name="Kikuchi H."/>
            <person name="Masuho Y."/>
            <person name="Yamashita R."/>
            <person name="Nakai K."/>
            <person name="Yada T."/>
            <person name="Nakamura Y."/>
            <person name="Ohara O."/>
            <person name="Isogai T."/>
            <person name="Sugano S."/>
        </authorList>
    </citation>
    <scope>NUCLEOTIDE SEQUENCE [LARGE SCALE MRNA]</scope>
    <source>
        <tissue>Brain</tissue>
    </source>
</reference>
<reference key="2">
    <citation type="journal article" date="2004" name="Nature">
        <title>The DNA sequence and biology of human chromosome 19.</title>
        <authorList>
            <person name="Grimwood J."/>
            <person name="Gordon L.A."/>
            <person name="Olsen A.S."/>
            <person name="Terry A."/>
            <person name="Schmutz J."/>
            <person name="Lamerdin J.E."/>
            <person name="Hellsten U."/>
            <person name="Goodstein D."/>
            <person name="Couronne O."/>
            <person name="Tran-Gyamfi M."/>
            <person name="Aerts A."/>
            <person name="Altherr M."/>
            <person name="Ashworth L."/>
            <person name="Bajorek E."/>
            <person name="Black S."/>
            <person name="Branscomb E."/>
            <person name="Caenepeel S."/>
            <person name="Carrano A.V."/>
            <person name="Caoile C."/>
            <person name="Chan Y.M."/>
            <person name="Christensen M."/>
            <person name="Cleland C.A."/>
            <person name="Copeland A."/>
            <person name="Dalin E."/>
            <person name="Dehal P."/>
            <person name="Denys M."/>
            <person name="Detter J.C."/>
            <person name="Escobar J."/>
            <person name="Flowers D."/>
            <person name="Fotopulos D."/>
            <person name="Garcia C."/>
            <person name="Georgescu A.M."/>
            <person name="Glavina T."/>
            <person name="Gomez M."/>
            <person name="Gonzales E."/>
            <person name="Groza M."/>
            <person name="Hammon N."/>
            <person name="Hawkins T."/>
            <person name="Haydu L."/>
            <person name="Ho I."/>
            <person name="Huang W."/>
            <person name="Israni S."/>
            <person name="Jett J."/>
            <person name="Kadner K."/>
            <person name="Kimball H."/>
            <person name="Kobayashi A."/>
            <person name="Larionov V."/>
            <person name="Leem S.-H."/>
            <person name="Lopez F."/>
            <person name="Lou Y."/>
            <person name="Lowry S."/>
            <person name="Malfatti S."/>
            <person name="Martinez D."/>
            <person name="McCready P.M."/>
            <person name="Medina C."/>
            <person name="Morgan J."/>
            <person name="Nelson K."/>
            <person name="Nolan M."/>
            <person name="Ovcharenko I."/>
            <person name="Pitluck S."/>
            <person name="Pollard M."/>
            <person name="Popkie A.P."/>
            <person name="Predki P."/>
            <person name="Quan G."/>
            <person name="Ramirez L."/>
            <person name="Rash S."/>
            <person name="Retterer J."/>
            <person name="Rodriguez A."/>
            <person name="Rogers S."/>
            <person name="Salamov A."/>
            <person name="Salazar A."/>
            <person name="She X."/>
            <person name="Smith D."/>
            <person name="Slezak T."/>
            <person name="Solovyev V."/>
            <person name="Thayer N."/>
            <person name="Tice H."/>
            <person name="Tsai M."/>
            <person name="Ustaszewska A."/>
            <person name="Vo N."/>
            <person name="Wagner M."/>
            <person name="Wheeler J."/>
            <person name="Wu K."/>
            <person name="Xie G."/>
            <person name="Yang J."/>
            <person name="Dubchak I."/>
            <person name="Furey T.S."/>
            <person name="DeJong P."/>
            <person name="Dickson M."/>
            <person name="Gordon D."/>
            <person name="Eichler E.E."/>
            <person name="Pennacchio L.A."/>
            <person name="Richardson P."/>
            <person name="Stubbs L."/>
            <person name="Rokhsar D.S."/>
            <person name="Myers R.M."/>
            <person name="Rubin E.M."/>
            <person name="Lucas S.M."/>
        </authorList>
    </citation>
    <scope>NUCLEOTIDE SEQUENCE [LARGE SCALE GENOMIC DNA]</scope>
</reference>
<name>YS025_HUMAN</name>
<evidence type="ECO:0000256" key="1">
    <source>
        <dbReference type="SAM" id="MobiDB-lite"/>
    </source>
</evidence>
<evidence type="ECO:0000305" key="2"/>
<dbReference type="EMBL" id="AK127589">
    <property type="status" value="NOT_ANNOTATED_CDS"/>
    <property type="molecule type" value="mRNA"/>
</dbReference>
<dbReference type="EMBL" id="AC004449">
    <property type="status" value="NOT_ANNOTATED_CDS"/>
    <property type="molecule type" value="Genomic_DNA"/>
</dbReference>
<dbReference type="BioMuta" id="-"/>
<dbReference type="neXtProt" id="NX_Q6ZSA8"/>
<dbReference type="InParanoid" id="Q6ZSA8"/>
<dbReference type="PAN-GO" id="Q6ZSA8">
    <property type="GO annotations" value="0 GO annotations based on evolutionary models"/>
</dbReference>
<dbReference type="Pharos" id="Q6ZSA8">
    <property type="development level" value="Tdark"/>
</dbReference>
<dbReference type="Proteomes" id="UP000005640">
    <property type="component" value="Unplaced"/>
</dbReference>
<dbReference type="RNAct" id="Q6ZSA8">
    <property type="molecule type" value="protein"/>
</dbReference>
<accession>Q6ZSA8</accession>
<feature type="chain" id="PRO_0000331523" description="Putative uncharacterized protein FLJ45684">
    <location>
        <begin position="1"/>
        <end position="131"/>
    </location>
</feature>
<feature type="region of interest" description="Disordered" evidence="1">
    <location>
        <begin position="101"/>
        <end position="131"/>
    </location>
</feature>
<feature type="sequence conflict" description="In Ref. 1; AK127589." evidence="2" ref="1">
    <original>C</original>
    <variation>R</variation>
    <location>
        <position position="50"/>
    </location>
</feature>
<proteinExistence type="uncertain"/>
<sequence length="131" mass="13825">METANGEEPPAGPPVSLHGRRLLRVGGACPTPLPVLQRLPPSALHHTLHCVPRRVCVSPLGQVTRIPPVRTVRRAPSGLLPQRRGGPSWWPPSGVARGGPSWWPPSGVVRGGPSSWPPSGVAEPREALGLP</sequence>
<organism>
    <name type="scientific">Homo sapiens</name>
    <name type="common">Human</name>
    <dbReference type="NCBI Taxonomy" id="9606"/>
    <lineage>
        <taxon>Eukaryota</taxon>
        <taxon>Metazoa</taxon>
        <taxon>Chordata</taxon>
        <taxon>Craniata</taxon>
        <taxon>Vertebrata</taxon>
        <taxon>Euteleostomi</taxon>
        <taxon>Mammalia</taxon>
        <taxon>Eutheria</taxon>
        <taxon>Euarchontoglires</taxon>
        <taxon>Primates</taxon>
        <taxon>Haplorrhini</taxon>
        <taxon>Catarrhini</taxon>
        <taxon>Hominidae</taxon>
        <taxon>Homo</taxon>
    </lineage>
</organism>
<protein>
    <recommendedName>
        <fullName>Putative uncharacterized protein FLJ45684</fullName>
    </recommendedName>
</protein>
<keyword id="KW-1185">Reference proteome</keyword>